<evidence type="ECO:0000250" key="1"/>
<evidence type="ECO:0000255" key="2"/>
<evidence type="ECO:0000305" key="3"/>
<reference key="1">
    <citation type="journal article" date="2003" name="Mol. Microbiol.">
        <title>Genome-based analysis of virulence genes in a non-biofilm-forming Staphylococcus epidermidis strain (ATCC 12228).</title>
        <authorList>
            <person name="Zhang Y.-Q."/>
            <person name="Ren S.-X."/>
            <person name="Li H.-L."/>
            <person name="Wang Y.-X."/>
            <person name="Fu G."/>
            <person name="Yang J."/>
            <person name="Qin Z.-Q."/>
            <person name="Miao Y.-G."/>
            <person name="Wang W.-Y."/>
            <person name="Chen R.-S."/>
            <person name="Shen Y."/>
            <person name="Chen Z."/>
            <person name="Yuan Z.-H."/>
            <person name="Zhao G.-P."/>
            <person name="Qu D."/>
            <person name="Danchin A."/>
            <person name="Wen Y.-M."/>
        </authorList>
    </citation>
    <scope>NUCLEOTIDE SEQUENCE [LARGE SCALE GENOMIC DNA]</scope>
    <source>
        <strain>ATCC 12228 / FDA PCI 1200</strain>
    </source>
</reference>
<comment type="function">
    <text evidence="1">Catalyzes quinol oxidation with the concomitant reduction of oxygen to water.</text>
</comment>
<comment type="catalytic activity">
    <reaction>
        <text>2 a quinol + O2 = 2 a quinone + 2 H2O</text>
        <dbReference type="Rhea" id="RHEA:55376"/>
        <dbReference type="ChEBI" id="CHEBI:15377"/>
        <dbReference type="ChEBI" id="CHEBI:15379"/>
        <dbReference type="ChEBI" id="CHEBI:24646"/>
        <dbReference type="ChEBI" id="CHEBI:132124"/>
    </reaction>
</comment>
<comment type="subcellular location">
    <subcellularLocation>
        <location evidence="1">Cell membrane</location>
        <topology evidence="1">Multi-pass membrane protein</topology>
    </subcellularLocation>
</comment>
<comment type="similarity">
    <text evidence="3">Belongs to the cytochrome c oxidase subunit 3 family.</text>
</comment>
<proteinExistence type="inferred from homology"/>
<protein>
    <recommendedName>
        <fullName>Probable quinol oxidase subunit 3</fullName>
        <ecNumber>1.10.3.-</ecNumber>
    </recommendedName>
    <alternativeName>
        <fullName>Quinol oxidase polypeptide III</fullName>
    </alternativeName>
</protein>
<gene>
    <name type="primary">qoxC</name>
    <name type="ordered locus">SE_0757</name>
</gene>
<organism>
    <name type="scientific">Staphylococcus epidermidis (strain ATCC 12228 / FDA PCI 1200)</name>
    <dbReference type="NCBI Taxonomy" id="176280"/>
    <lineage>
        <taxon>Bacteria</taxon>
        <taxon>Bacillati</taxon>
        <taxon>Bacillota</taxon>
        <taxon>Bacilli</taxon>
        <taxon>Bacillales</taxon>
        <taxon>Staphylococcaceae</taxon>
        <taxon>Staphylococcus</taxon>
    </lineage>
</organism>
<name>QOX3_STAES</name>
<keyword id="KW-1003">Cell membrane</keyword>
<keyword id="KW-0472">Membrane</keyword>
<keyword id="KW-0560">Oxidoreductase</keyword>
<keyword id="KW-0812">Transmembrane</keyword>
<keyword id="KW-1133">Transmembrane helix</keyword>
<dbReference type="EC" id="1.10.3.-"/>
<dbReference type="EMBL" id="AE015929">
    <property type="protein sequence ID" value="AAO04354.1"/>
    <property type="molecule type" value="Genomic_DNA"/>
</dbReference>
<dbReference type="RefSeq" id="NP_764312.1">
    <property type="nucleotide sequence ID" value="NC_004461.1"/>
</dbReference>
<dbReference type="RefSeq" id="WP_001831738.1">
    <property type="nucleotide sequence ID" value="NZ_WBME01000028.1"/>
</dbReference>
<dbReference type="SMR" id="Q8CPP8"/>
<dbReference type="GeneID" id="50019103"/>
<dbReference type="KEGG" id="sep:SE_0757"/>
<dbReference type="PATRIC" id="fig|176280.10.peg.729"/>
<dbReference type="eggNOG" id="COG1845">
    <property type="taxonomic scope" value="Bacteria"/>
</dbReference>
<dbReference type="HOGENOM" id="CLU_044071_3_2_9"/>
<dbReference type="OrthoDB" id="9810850at2"/>
<dbReference type="Proteomes" id="UP000001411">
    <property type="component" value="Chromosome"/>
</dbReference>
<dbReference type="GO" id="GO:0005886">
    <property type="term" value="C:plasma membrane"/>
    <property type="evidence" value="ECO:0007669"/>
    <property type="project" value="UniProtKB-SubCell"/>
</dbReference>
<dbReference type="GO" id="GO:0004129">
    <property type="term" value="F:cytochrome-c oxidase activity"/>
    <property type="evidence" value="ECO:0007669"/>
    <property type="project" value="InterPro"/>
</dbReference>
<dbReference type="GO" id="GO:0019646">
    <property type="term" value="P:aerobic electron transport chain"/>
    <property type="evidence" value="ECO:0007669"/>
    <property type="project" value="InterPro"/>
</dbReference>
<dbReference type="GO" id="GO:0042773">
    <property type="term" value="P:ATP synthesis coupled electron transport"/>
    <property type="evidence" value="ECO:0007669"/>
    <property type="project" value="InterPro"/>
</dbReference>
<dbReference type="CDD" id="cd02863">
    <property type="entry name" value="Ubiquinol_oxidase_III"/>
    <property type="match status" value="1"/>
</dbReference>
<dbReference type="FunFam" id="1.20.120.80:FF:000001">
    <property type="entry name" value="Cytochrome (Ubi)quinol oxidase subunit III"/>
    <property type="match status" value="1"/>
</dbReference>
<dbReference type="Gene3D" id="1.20.120.80">
    <property type="entry name" value="Cytochrome c oxidase, subunit III, four-helix bundle"/>
    <property type="match status" value="1"/>
</dbReference>
<dbReference type="InterPro" id="IPR024791">
    <property type="entry name" value="Cyt_c/ubiquinol_Oxase_su3"/>
</dbReference>
<dbReference type="InterPro" id="IPR000298">
    <property type="entry name" value="Cyt_c_oxidase-like_su3"/>
</dbReference>
<dbReference type="InterPro" id="IPR035973">
    <property type="entry name" value="Cyt_c_oxidase_su3-like_sf"/>
</dbReference>
<dbReference type="InterPro" id="IPR013833">
    <property type="entry name" value="Cyt_c_oxidase_su3_a-hlx"/>
</dbReference>
<dbReference type="InterPro" id="IPR014246">
    <property type="entry name" value="QoxC"/>
</dbReference>
<dbReference type="InterPro" id="IPR033946">
    <property type="entry name" value="Ubiquinol_oxase_su3_dom"/>
</dbReference>
<dbReference type="NCBIfam" id="TIGR02897">
    <property type="entry name" value="QoxC"/>
    <property type="match status" value="1"/>
</dbReference>
<dbReference type="PANTHER" id="PTHR11403:SF2">
    <property type="entry name" value="CYTOCHROME BO(3) UBIQUINOL OXIDASE SUBUNIT 3"/>
    <property type="match status" value="1"/>
</dbReference>
<dbReference type="PANTHER" id="PTHR11403">
    <property type="entry name" value="CYTOCHROME C OXIDASE SUBUNIT III"/>
    <property type="match status" value="1"/>
</dbReference>
<dbReference type="Pfam" id="PF00510">
    <property type="entry name" value="COX3"/>
    <property type="match status" value="1"/>
</dbReference>
<dbReference type="SUPFAM" id="SSF81452">
    <property type="entry name" value="Cytochrome c oxidase subunit III-like"/>
    <property type="match status" value="1"/>
</dbReference>
<dbReference type="PROSITE" id="PS50253">
    <property type="entry name" value="COX3"/>
    <property type="match status" value="1"/>
</dbReference>
<accession>Q8CPP8</accession>
<feature type="chain" id="PRO_0000275893" description="Probable quinol oxidase subunit 3">
    <location>
        <begin position="1"/>
        <end position="201"/>
    </location>
</feature>
<feature type="transmembrane region" description="Helical" evidence="2">
    <location>
        <begin position="20"/>
        <end position="40"/>
    </location>
</feature>
<feature type="transmembrane region" description="Helical" evidence="2">
    <location>
        <begin position="62"/>
        <end position="82"/>
    </location>
</feature>
<feature type="transmembrane region" description="Helical" evidence="2">
    <location>
        <begin position="91"/>
        <end position="111"/>
    </location>
</feature>
<feature type="transmembrane region" description="Helical" evidence="2">
    <location>
        <begin position="133"/>
        <end position="153"/>
    </location>
</feature>
<feature type="transmembrane region" description="Helical" evidence="2">
    <location>
        <begin position="172"/>
        <end position="192"/>
    </location>
</feature>
<sequence>MSHDANTIDSRTHEGELNKLGFWIFLTAEFALFGTLFATLLTLQHGGGYGGKLTTDLFELHLILIMTFALLISSYTCGIAIYYMRQEKQNLMMFWMIITVILGLVFVGFEIYEFAHYASEGVNPTIGSFWSSFFILLGTHGAHVSLGIVWVICLLIQIGTRGLDSYNAPKLFIVSLYWHFLDVVWVFIFTAVYMIGMVYSG</sequence>